<protein>
    <recommendedName>
        <fullName evidence="1">Probable GTP-binding protein EngB</fullName>
    </recommendedName>
</protein>
<reference key="1">
    <citation type="journal article" date="2008" name="Genomics">
        <title>Characterization of ST-4821 complex, a unique Neisseria meningitidis clone.</title>
        <authorList>
            <person name="Peng J."/>
            <person name="Yang L."/>
            <person name="Yang F."/>
            <person name="Yang J."/>
            <person name="Yan Y."/>
            <person name="Nie H."/>
            <person name="Zhang X."/>
            <person name="Xiong Z."/>
            <person name="Jiang Y."/>
            <person name="Cheng F."/>
            <person name="Xu X."/>
            <person name="Chen S."/>
            <person name="Sun L."/>
            <person name="Li W."/>
            <person name="Shen Y."/>
            <person name="Shao Z."/>
            <person name="Liang X."/>
            <person name="Xu J."/>
            <person name="Jin Q."/>
        </authorList>
    </citation>
    <scope>NUCLEOTIDE SEQUENCE [LARGE SCALE GENOMIC DNA]</scope>
    <source>
        <strain>053442</strain>
    </source>
</reference>
<organism>
    <name type="scientific">Neisseria meningitidis serogroup C (strain 053442)</name>
    <dbReference type="NCBI Taxonomy" id="374833"/>
    <lineage>
        <taxon>Bacteria</taxon>
        <taxon>Pseudomonadati</taxon>
        <taxon>Pseudomonadota</taxon>
        <taxon>Betaproteobacteria</taxon>
        <taxon>Neisseriales</taxon>
        <taxon>Neisseriaceae</taxon>
        <taxon>Neisseria</taxon>
    </lineage>
</organism>
<accession>A9M1V2</accession>
<name>ENGB_NEIM0</name>
<dbReference type="EMBL" id="CP000381">
    <property type="protein sequence ID" value="ABX72627.1"/>
    <property type="molecule type" value="Genomic_DNA"/>
</dbReference>
<dbReference type="SMR" id="A9M1V2"/>
<dbReference type="KEGG" id="nmn:NMCC_0422"/>
<dbReference type="HOGENOM" id="CLU_033732_1_0_4"/>
<dbReference type="Proteomes" id="UP000001177">
    <property type="component" value="Chromosome"/>
</dbReference>
<dbReference type="GO" id="GO:0005829">
    <property type="term" value="C:cytosol"/>
    <property type="evidence" value="ECO:0007669"/>
    <property type="project" value="TreeGrafter"/>
</dbReference>
<dbReference type="GO" id="GO:0005525">
    <property type="term" value="F:GTP binding"/>
    <property type="evidence" value="ECO:0007669"/>
    <property type="project" value="UniProtKB-UniRule"/>
</dbReference>
<dbReference type="GO" id="GO:0046872">
    <property type="term" value="F:metal ion binding"/>
    <property type="evidence" value="ECO:0007669"/>
    <property type="project" value="UniProtKB-KW"/>
</dbReference>
<dbReference type="GO" id="GO:0000917">
    <property type="term" value="P:division septum assembly"/>
    <property type="evidence" value="ECO:0007669"/>
    <property type="project" value="UniProtKB-KW"/>
</dbReference>
<dbReference type="CDD" id="cd01876">
    <property type="entry name" value="YihA_EngB"/>
    <property type="match status" value="1"/>
</dbReference>
<dbReference type="FunFam" id="3.40.50.300:FF:000098">
    <property type="entry name" value="Probable GTP-binding protein EngB"/>
    <property type="match status" value="1"/>
</dbReference>
<dbReference type="Gene3D" id="3.40.50.300">
    <property type="entry name" value="P-loop containing nucleotide triphosphate hydrolases"/>
    <property type="match status" value="1"/>
</dbReference>
<dbReference type="HAMAP" id="MF_00321">
    <property type="entry name" value="GTPase_EngB"/>
    <property type="match status" value="1"/>
</dbReference>
<dbReference type="InterPro" id="IPR030393">
    <property type="entry name" value="G_ENGB_dom"/>
</dbReference>
<dbReference type="InterPro" id="IPR006073">
    <property type="entry name" value="GTP-bd"/>
</dbReference>
<dbReference type="InterPro" id="IPR019987">
    <property type="entry name" value="GTP-bd_ribosome_bio_YsxC"/>
</dbReference>
<dbReference type="InterPro" id="IPR027417">
    <property type="entry name" value="P-loop_NTPase"/>
</dbReference>
<dbReference type="NCBIfam" id="TIGR03598">
    <property type="entry name" value="GTPase_YsxC"/>
    <property type="match status" value="1"/>
</dbReference>
<dbReference type="PANTHER" id="PTHR11649:SF13">
    <property type="entry name" value="ENGB-TYPE G DOMAIN-CONTAINING PROTEIN"/>
    <property type="match status" value="1"/>
</dbReference>
<dbReference type="PANTHER" id="PTHR11649">
    <property type="entry name" value="MSS1/TRME-RELATED GTP-BINDING PROTEIN"/>
    <property type="match status" value="1"/>
</dbReference>
<dbReference type="Pfam" id="PF01926">
    <property type="entry name" value="MMR_HSR1"/>
    <property type="match status" value="1"/>
</dbReference>
<dbReference type="SUPFAM" id="SSF52540">
    <property type="entry name" value="P-loop containing nucleoside triphosphate hydrolases"/>
    <property type="match status" value="1"/>
</dbReference>
<dbReference type="PROSITE" id="PS51706">
    <property type="entry name" value="G_ENGB"/>
    <property type="match status" value="1"/>
</dbReference>
<proteinExistence type="inferred from homology"/>
<sequence length="209" mass="23562">MNLFQNAKFFTTVNHLKDLPDTPLEIAFVGRSNAGKSSAINTLTNHVRLAYVSKTPGRTQHINFFELQNGNFMVDLPGYGYAQVPEAVRAHWVNLLGDYLQQRKQLIGLVLIMDARHPLKELDIRMLDFFHTTGRPVHILLSKADKLSKNEQIKTLSQVKKLLKPYSDRQNISVQLFSSLKKQGIDEANRTVGSWFDAADAAASSPKEN</sequence>
<gene>
    <name evidence="1" type="primary">engB</name>
    <name type="ordered locus">NMCC_0422</name>
</gene>
<comment type="function">
    <text evidence="1">Necessary for normal cell division and for the maintenance of normal septation.</text>
</comment>
<comment type="cofactor">
    <cofactor evidence="1">
        <name>Mg(2+)</name>
        <dbReference type="ChEBI" id="CHEBI:18420"/>
    </cofactor>
</comment>
<comment type="similarity">
    <text evidence="1">Belongs to the TRAFAC class TrmE-Era-EngA-EngB-Septin-like GTPase superfamily. EngB GTPase family.</text>
</comment>
<keyword id="KW-0131">Cell cycle</keyword>
<keyword id="KW-0132">Cell division</keyword>
<keyword id="KW-0342">GTP-binding</keyword>
<keyword id="KW-0460">Magnesium</keyword>
<keyword id="KW-0479">Metal-binding</keyword>
<keyword id="KW-0547">Nucleotide-binding</keyword>
<keyword id="KW-0717">Septation</keyword>
<evidence type="ECO:0000255" key="1">
    <source>
        <dbReference type="HAMAP-Rule" id="MF_00321"/>
    </source>
</evidence>
<feature type="chain" id="PRO_1000079174" description="Probable GTP-binding protein EngB">
    <location>
        <begin position="1"/>
        <end position="209"/>
    </location>
</feature>
<feature type="domain" description="EngB-type G" evidence="1">
    <location>
        <begin position="22"/>
        <end position="198"/>
    </location>
</feature>
<feature type="binding site" evidence="1">
    <location>
        <position position="37"/>
    </location>
    <ligand>
        <name>Mg(2+)</name>
        <dbReference type="ChEBI" id="CHEBI:18420"/>
    </ligand>
</feature>
<feature type="binding site" evidence="1">
    <location>
        <position position="59"/>
    </location>
    <ligand>
        <name>Mg(2+)</name>
        <dbReference type="ChEBI" id="CHEBI:18420"/>
    </ligand>
</feature>